<sequence length="400" mass="43709">MGKQQPISQRKLLGVAGLGWLFDAMDVGILSFIIAALHVEWNLSPEEMKWIGSVNSIGMAAGAFLFGLLADRIGRKKVFIITLLCFSIGSGISAFVTSLSAFLILRFVIGMGLGGELPVASTLVSEAVVPEKRGRVIVLLESFWAVGWLAAALISYFVIPSFGWQAALLLTALTAFYALYLRTSLPDSPKYESLSAKKRSMWENVKSVWARQYIRPTVMLSIVWFCVVFSYYGMFLWLPSVMLLKGFSMIQSFEYVLLMTLAQLPGYFSAAWLIEKAGRKWILVVYLIGTAGSAYFFGTADSLSLLLTAGVLLSFFNLGAWGVLYAYTPEQYPTAIRATGSGTTAAFGRIGGIFGPLLVGTLAARHISFSVIFSIFCIAILLAVACILIMGKETKQTELE</sequence>
<gene>
    <name evidence="3" type="primary">niaP</name>
    <name type="synonym">yceI</name>
    <name type="ordered locus">BSU02950</name>
</gene>
<feature type="chain" id="PRO_0000050491" description="Putative niacin/nicotinamide transporter NiaP">
    <location>
        <begin position="1"/>
        <end position="400"/>
    </location>
</feature>
<feature type="topological domain" description="Cytoplasmic" evidence="1">
    <location>
        <begin position="1"/>
        <end position="14"/>
    </location>
</feature>
<feature type="transmembrane region" description="Helical; Name=1" evidence="1">
    <location>
        <begin position="15"/>
        <end position="35"/>
    </location>
</feature>
<feature type="topological domain" description="Extracellular" evidence="1">
    <location>
        <begin position="36"/>
        <end position="49"/>
    </location>
</feature>
<feature type="transmembrane region" description="Helical; Name=2" evidence="1">
    <location>
        <begin position="50"/>
        <end position="70"/>
    </location>
</feature>
<feature type="topological domain" description="Cytoplasmic" evidence="1">
    <location>
        <begin position="71"/>
        <end position="77"/>
    </location>
</feature>
<feature type="transmembrane region" description="Helical; Name=3" evidence="1">
    <location>
        <begin position="78"/>
        <end position="98"/>
    </location>
</feature>
<feature type="transmembrane region" description="Helical; Name=4" evidence="1">
    <location>
        <begin position="99"/>
        <end position="119"/>
    </location>
</feature>
<feature type="topological domain" description="Cytoplasmic" evidence="1">
    <location>
        <begin position="120"/>
        <end position="142"/>
    </location>
</feature>
<feature type="transmembrane region" description="Helical; Name=5" evidence="1">
    <location>
        <begin position="143"/>
        <end position="163"/>
    </location>
</feature>
<feature type="topological domain" description="Extracellular" evidence="1">
    <location>
        <begin position="164"/>
        <end position="165"/>
    </location>
</feature>
<feature type="transmembrane region" description="Helical; Name=6" evidence="1">
    <location>
        <begin position="166"/>
        <end position="186"/>
    </location>
</feature>
<feature type="topological domain" description="Cytoplasmic" evidence="1">
    <location>
        <begin position="187"/>
        <end position="217"/>
    </location>
</feature>
<feature type="transmembrane region" description="Helical; Name=7" evidence="1">
    <location>
        <begin position="218"/>
        <end position="238"/>
    </location>
</feature>
<feature type="topological domain" description="Extracellular" evidence="1">
    <location>
        <begin position="239"/>
        <end position="253"/>
    </location>
</feature>
<feature type="transmembrane region" description="Helical; Name=8" evidence="1">
    <location>
        <begin position="254"/>
        <end position="274"/>
    </location>
</feature>
<feature type="topological domain" description="Cytoplasmic" evidence="1">
    <location>
        <begin position="275"/>
        <end position="280"/>
    </location>
</feature>
<feature type="transmembrane region" description="Helical; Name=9" evidence="1">
    <location>
        <begin position="281"/>
        <end position="301"/>
    </location>
</feature>
<feature type="topological domain" description="Extracellular" evidence="1">
    <location>
        <begin position="302"/>
        <end position="304"/>
    </location>
</feature>
<feature type="transmembrane region" description="Helical; Name=10" evidence="1">
    <location>
        <begin position="305"/>
        <end position="325"/>
    </location>
</feature>
<feature type="topological domain" description="Cytoplasmic" evidence="1">
    <location>
        <begin position="326"/>
        <end position="343"/>
    </location>
</feature>
<feature type="transmembrane region" description="Helical; Name=11" evidence="1">
    <location>
        <begin position="344"/>
        <end position="364"/>
    </location>
</feature>
<feature type="topological domain" description="Extracellular" evidence="1">
    <location>
        <begin position="365"/>
        <end position="370"/>
    </location>
</feature>
<feature type="transmembrane region" description="Helical; Name=12" evidence="1">
    <location>
        <begin position="371"/>
        <end position="391"/>
    </location>
</feature>
<feature type="topological domain" description="Cytoplasmic" evidence="1">
    <location>
        <begin position="392"/>
        <end position="400"/>
    </location>
</feature>
<accession>O34691</accession>
<name>NIAP_BACSU</name>
<organism>
    <name type="scientific">Bacillus subtilis (strain 168)</name>
    <dbReference type="NCBI Taxonomy" id="224308"/>
    <lineage>
        <taxon>Bacteria</taxon>
        <taxon>Bacillati</taxon>
        <taxon>Bacillota</taxon>
        <taxon>Bacilli</taxon>
        <taxon>Bacillales</taxon>
        <taxon>Bacillaceae</taxon>
        <taxon>Bacillus</taxon>
    </lineage>
</organism>
<comment type="function">
    <text>Probably involved in the uptake of amidated and deamidated forms of niacin. Increases the growth rate of E.coli that is unable to make niacin de novo; confers increased sensitivity to the toxic niacin analog 6-amino-nicotinamide to wild-type E.coli. There is probably another mechanism for niacin uptake.</text>
</comment>
<comment type="subcellular location">
    <subcellularLocation>
        <location evidence="4">Cell membrane</location>
        <topology evidence="4">Multi-pass membrane protein</topology>
    </subcellularLocation>
</comment>
<comment type="disruption phenotype">
    <text evidence="2">Partially reduces sensitivity to the toxic niacin analog 6-amino-nicotinamide.</text>
</comment>
<comment type="similarity">
    <text evidence="4">Belongs to the major facilitator superfamily. Sugar transporter (TC 2.A.1.1) family.</text>
</comment>
<proteinExistence type="evidence at protein level"/>
<keyword id="KW-1003">Cell membrane</keyword>
<keyword id="KW-0472">Membrane</keyword>
<keyword id="KW-1185">Reference proteome</keyword>
<keyword id="KW-0812">Transmembrane</keyword>
<keyword id="KW-1133">Transmembrane helix</keyword>
<keyword id="KW-0813">Transport</keyword>
<protein>
    <recommendedName>
        <fullName>Putative niacin/nicotinamide transporter NiaP</fullName>
    </recommendedName>
</protein>
<dbReference type="EMBL" id="AB000617">
    <property type="protein sequence ID" value="BAA22256.1"/>
    <property type="molecule type" value="Genomic_DNA"/>
</dbReference>
<dbReference type="EMBL" id="AL009126">
    <property type="protein sequence ID" value="CAB12089.1"/>
    <property type="molecule type" value="Genomic_DNA"/>
</dbReference>
<dbReference type="PIR" id="C69757">
    <property type="entry name" value="C69757"/>
</dbReference>
<dbReference type="RefSeq" id="NP_388177.1">
    <property type="nucleotide sequence ID" value="NC_000964.3"/>
</dbReference>
<dbReference type="RefSeq" id="WP_003246397.1">
    <property type="nucleotide sequence ID" value="NZ_OZ025638.1"/>
</dbReference>
<dbReference type="SMR" id="O34691"/>
<dbReference type="FunCoup" id="O34691">
    <property type="interactions" value="424"/>
</dbReference>
<dbReference type="STRING" id="224308.BSU02950"/>
<dbReference type="TCDB" id="2.A.1.82.4">
    <property type="family name" value="the major facilitator superfamily (mfs)"/>
</dbReference>
<dbReference type="PaxDb" id="224308-BSU02950"/>
<dbReference type="EnsemblBacteria" id="CAB12089">
    <property type="protein sequence ID" value="CAB12089"/>
    <property type="gene ID" value="BSU_02950"/>
</dbReference>
<dbReference type="GeneID" id="938365"/>
<dbReference type="KEGG" id="bsu:BSU02950"/>
<dbReference type="PATRIC" id="fig|224308.179.peg.307"/>
<dbReference type="eggNOG" id="COG0477">
    <property type="taxonomic scope" value="Bacteria"/>
</dbReference>
<dbReference type="InParanoid" id="O34691"/>
<dbReference type="OrthoDB" id="9787026at2"/>
<dbReference type="PhylomeDB" id="O34691"/>
<dbReference type="BioCyc" id="BSUB:BSU02950-MONOMER"/>
<dbReference type="Proteomes" id="UP000001570">
    <property type="component" value="Chromosome"/>
</dbReference>
<dbReference type="GO" id="GO:0005886">
    <property type="term" value="C:plasma membrane"/>
    <property type="evidence" value="ECO:0007669"/>
    <property type="project" value="UniProtKB-SubCell"/>
</dbReference>
<dbReference type="GO" id="GO:0022857">
    <property type="term" value="F:transmembrane transporter activity"/>
    <property type="evidence" value="ECO:0007669"/>
    <property type="project" value="InterPro"/>
</dbReference>
<dbReference type="CDD" id="cd17316">
    <property type="entry name" value="MFS_SV2_like"/>
    <property type="match status" value="1"/>
</dbReference>
<dbReference type="Gene3D" id="1.20.1250.20">
    <property type="entry name" value="MFS general substrate transporter like domains"/>
    <property type="match status" value="2"/>
</dbReference>
<dbReference type="InterPro" id="IPR011701">
    <property type="entry name" value="MFS"/>
</dbReference>
<dbReference type="InterPro" id="IPR020846">
    <property type="entry name" value="MFS_dom"/>
</dbReference>
<dbReference type="InterPro" id="IPR036259">
    <property type="entry name" value="MFS_trans_sf"/>
</dbReference>
<dbReference type="InterPro" id="IPR005829">
    <property type="entry name" value="Sugar_transporter_CS"/>
</dbReference>
<dbReference type="PANTHER" id="PTHR23508">
    <property type="entry name" value="CARBOXYLIC ACID TRANSPORTER PROTEIN HOMOLOG"/>
    <property type="match status" value="1"/>
</dbReference>
<dbReference type="PANTHER" id="PTHR23508:SF10">
    <property type="entry name" value="CARBOXYLIC ACID TRANSPORTER PROTEIN HOMOLOG"/>
    <property type="match status" value="1"/>
</dbReference>
<dbReference type="Pfam" id="PF07690">
    <property type="entry name" value="MFS_1"/>
    <property type="match status" value="1"/>
</dbReference>
<dbReference type="SUPFAM" id="SSF103473">
    <property type="entry name" value="MFS general substrate transporter"/>
    <property type="match status" value="1"/>
</dbReference>
<dbReference type="PROSITE" id="PS50850">
    <property type="entry name" value="MFS"/>
    <property type="match status" value="1"/>
</dbReference>
<dbReference type="PROSITE" id="PS00217">
    <property type="entry name" value="SUGAR_TRANSPORT_2"/>
    <property type="match status" value="1"/>
</dbReference>
<evidence type="ECO:0000255" key="1"/>
<evidence type="ECO:0000269" key="2">
    <source>
    </source>
</evidence>
<evidence type="ECO:0000303" key="3">
    <source>
    </source>
</evidence>
<evidence type="ECO:0000305" key="4"/>
<reference key="1">
    <citation type="journal article" date="1997" name="Microbiology">
        <title>A 32 kb nucleotide sequence from the region of the lincomycin-resistance gene (22 degrees-25 degrees) of the Bacillus subtilis chromosome and identification of the site of the lin-2 mutation.</title>
        <authorList>
            <person name="Kumano M."/>
            <person name="Tamakoshi A."/>
            <person name="Yamane K."/>
        </authorList>
    </citation>
    <scope>NUCLEOTIDE SEQUENCE [GENOMIC DNA]</scope>
    <source>
        <strain>168</strain>
    </source>
</reference>
<reference key="2">
    <citation type="journal article" date="1997" name="Nature">
        <title>The complete genome sequence of the Gram-positive bacterium Bacillus subtilis.</title>
        <authorList>
            <person name="Kunst F."/>
            <person name="Ogasawara N."/>
            <person name="Moszer I."/>
            <person name="Albertini A.M."/>
            <person name="Alloni G."/>
            <person name="Azevedo V."/>
            <person name="Bertero M.G."/>
            <person name="Bessieres P."/>
            <person name="Bolotin A."/>
            <person name="Borchert S."/>
            <person name="Borriss R."/>
            <person name="Boursier L."/>
            <person name="Brans A."/>
            <person name="Braun M."/>
            <person name="Brignell S.C."/>
            <person name="Bron S."/>
            <person name="Brouillet S."/>
            <person name="Bruschi C.V."/>
            <person name="Caldwell B."/>
            <person name="Capuano V."/>
            <person name="Carter N.M."/>
            <person name="Choi S.-K."/>
            <person name="Codani J.-J."/>
            <person name="Connerton I.F."/>
            <person name="Cummings N.J."/>
            <person name="Daniel R.A."/>
            <person name="Denizot F."/>
            <person name="Devine K.M."/>
            <person name="Duesterhoeft A."/>
            <person name="Ehrlich S.D."/>
            <person name="Emmerson P.T."/>
            <person name="Entian K.-D."/>
            <person name="Errington J."/>
            <person name="Fabret C."/>
            <person name="Ferrari E."/>
            <person name="Foulger D."/>
            <person name="Fritz C."/>
            <person name="Fujita M."/>
            <person name="Fujita Y."/>
            <person name="Fuma S."/>
            <person name="Galizzi A."/>
            <person name="Galleron N."/>
            <person name="Ghim S.-Y."/>
            <person name="Glaser P."/>
            <person name="Goffeau A."/>
            <person name="Golightly E.J."/>
            <person name="Grandi G."/>
            <person name="Guiseppi G."/>
            <person name="Guy B.J."/>
            <person name="Haga K."/>
            <person name="Haiech J."/>
            <person name="Harwood C.R."/>
            <person name="Henaut A."/>
            <person name="Hilbert H."/>
            <person name="Holsappel S."/>
            <person name="Hosono S."/>
            <person name="Hullo M.-F."/>
            <person name="Itaya M."/>
            <person name="Jones L.-M."/>
            <person name="Joris B."/>
            <person name="Karamata D."/>
            <person name="Kasahara Y."/>
            <person name="Klaerr-Blanchard M."/>
            <person name="Klein C."/>
            <person name="Kobayashi Y."/>
            <person name="Koetter P."/>
            <person name="Koningstein G."/>
            <person name="Krogh S."/>
            <person name="Kumano M."/>
            <person name="Kurita K."/>
            <person name="Lapidus A."/>
            <person name="Lardinois S."/>
            <person name="Lauber J."/>
            <person name="Lazarevic V."/>
            <person name="Lee S.-M."/>
            <person name="Levine A."/>
            <person name="Liu H."/>
            <person name="Masuda S."/>
            <person name="Mauel C."/>
            <person name="Medigue C."/>
            <person name="Medina N."/>
            <person name="Mellado R.P."/>
            <person name="Mizuno M."/>
            <person name="Moestl D."/>
            <person name="Nakai S."/>
            <person name="Noback M."/>
            <person name="Noone D."/>
            <person name="O'Reilly M."/>
            <person name="Ogawa K."/>
            <person name="Ogiwara A."/>
            <person name="Oudega B."/>
            <person name="Park S.-H."/>
            <person name="Parro V."/>
            <person name="Pohl T.M."/>
            <person name="Portetelle D."/>
            <person name="Porwollik S."/>
            <person name="Prescott A.M."/>
            <person name="Presecan E."/>
            <person name="Pujic P."/>
            <person name="Purnelle B."/>
            <person name="Rapoport G."/>
            <person name="Rey M."/>
            <person name="Reynolds S."/>
            <person name="Rieger M."/>
            <person name="Rivolta C."/>
            <person name="Rocha E."/>
            <person name="Roche B."/>
            <person name="Rose M."/>
            <person name="Sadaie Y."/>
            <person name="Sato T."/>
            <person name="Scanlan E."/>
            <person name="Schleich S."/>
            <person name="Schroeter R."/>
            <person name="Scoffone F."/>
            <person name="Sekiguchi J."/>
            <person name="Sekowska A."/>
            <person name="Seror S.J."/>
            <person name="Serror P."/>
            <person name="Shin B.-S."/>
            <person name="Soldo B."/>
            <person name="Sorokin A."/>
            <person name="Tacconi E."/>
            <person name="Takagi T."/>
            <person name="Takahashi H."/>
            <person name="Takemaru K."/>
            <person name="Takeuchi M."/>
            <person name="Tamakoshi A."/>
            <person name="Tanaka T."/>
            <person name="Terpstra P."/>
            <person name="Tognoni A."/>
            <person name="Tosato V."/>
            <person name="Uchiyama S."/>
            <person name="Vandenbol M."/>
            <person name="Vannier F."/>
            <person name="Vassarotti A."/>
            <person name="Viari A."/>
            <person name="Wambutt R."/>
            <person name="Wedler E."/>
            <person name="Wedler H."/>
            <person name="Weitzenegger T."/>
            <person name="Winters P."/>
            <person name="Wipat A."/>
            <person name="Yamamoto H."/>
            <person name="Yamane K."/>
            <person name="Yasumoto K."/>
            <person name="Yata K."/>
            <person name="Yoshida K."/>
            <person name="Yoshikawa H.-F."/>
            <person name="Zumstein E."/>
            <person name="Yoshikawa H."/>
            <person name="Danchin A."/>
        </authorList>
    </citation>
    <scope>NUCLEOTIDE SEQUENCE [LARGE SCALE GENOMIC DNA]</scope>
    <source>
        <strain>168</strain>
    </source>
</reference>
<reference key="3">
    <citation type="journal article" date="2008" name="Nucleic Acids Res.">
        <title>Transcriptional regulation of NAD metabolism in bacteria: genomic reconstruction of NiaR (YrxA) regulon.</title>
        <authorList>
            <person name="Rodionov D.A."/>
            <person name="Li X."/>
            <person name="Rodionova I.A."/>
            <person name="Yang C."/>
            <person name="Sorci L."/>
            <person name="Dervyn E."/>
            <person name="Martynowski D."/>
            <person name="Zhang H."/>
            <person name="Gelfand M.S."/>
            <person name="Osterman A.L."/>
        </authorList>
    </citation>
    <scope>EXPRESSION IN E.COLI</scope>
    <scope>POSSIBLE FUNCTION AS A NICOTINAMIDE TRANSPORTER</scope>
    <scope>DISRUPTION PHENOTYPE</scope>
</reference>